<proteinExistence type="inferred from homology"/>
<comment type="function">
    <text evidence="1">An accessory protein needed during the final step in the assembly of 30S ribosomal subunit, possibly for assembly of the head region. Essential for efficient processing of 16S rRNA. May be needed both before and after RbfA during the maturation of 16S rRNA. It has affinity for free ribosomal 30S subunits but not for 70S ribosomes.</text>
</comment>
<comment type="subunit">
    <text evidence="1">Binds ribosomal protein uS19.</text>
</comment>
<comment type="subcellular location">
    <subcellularLocation>
        <location evidence="1">Cytoplasm</location>
    </subcellularLocation>
</comment>
<comment type="domain">
    <text evidence="1">The PRC barrel domain binds ribosomal protein uS19.</text>
</comment>
<comment type="similarity">
    <text evidence="1">Belongs to the RimM family.</text>
</comment>
<feature type="chain" id="PRO_0000163356" description="Ribosome maturation factor RimM">
    <location>
        <begin position="1"/>
        <end position="167"/>
    </location>
</feature>
<feature type="domain" description="PRC barrel" evidence="1">
    <location>
        <begin position="94"/>
        <end position="165"/>
    </location>
</feature>
<protein>
    <recommendedName>
        <fullName evidence="1">Ribosome maturation factor RimM</fullName>
    </recommendedName>
</protein>
<gene>
    <name evidence="1" type="primary">rimM</name>
    <name type="ordered locus">MW1122</name>
</gene>
<reference key="1">
    <citation type="journal article" date="2002" name="Lancet">
        <title>Genome and virulence determinants of high virulence community-acquired MRSA.</title>
        <authorList>
            <person name="Baba T."/>
            <person name="Takeuchi F."/>
            <person name="Kuroda M."/>
            <person name="Yuzawa H."/>
            <person name="Aoki K."/>
            <person name="Oguchi A."/>
            <person name="Nagai Y."/>
            <person name="Iwama N."/>
            <person name="Asano K."/>
            <person name="Naimi T."/>
            <person name="Kuroda H."/>
            <person name="Cui L."/>
            <person name="Yamamoto K."/>
            <person name="Hiramatsu K."/>
        </authorList>
    </citation>
    <scope>NUCLEOTIDE SEQUENCE [LARGE SCALE GENOMIC DNA]</scope>
    <source>
        <strain>MW2</strain>
    </source>
</reference>
<sequence length="167" mass="19073">MRVEVGQIVNTHGIKGEIKVKSNSDFTDVRFQPGQVLTVVHNNNDLEYTVKSHRVHKGLHMLTFEGINNINDIEHLKGSSIYQERDHEDIVLEENEFYYSDIIGCTVFDDQETPIGRVINIFETGANDVWVIKGSKEYLIPYIADVVKEVDVENKKIIITPMEGLLD</sequence>
<name>RIMM_STAAW</name>
<evidence type="ECO:0000255" key="1">
    <source>
        <dbReference type="HAMAP-Rule" id="MF_00014"/>
    </source>
</evidence>
<dbReference type="EMBL" id="BA000033">
    <property type="protein sequence ID" value="BAB94987.1"/>
    <property type="molecule type" value="Genomic_DNA"/>
</dbReference>
<dbReference type="RefSeq" id="WP_001261987.1">
    <property type="nucleotide sequence ID" value="NC_003923.1"/>
</dbReference>
<dbReference type="SMR" id="P66657"/>
<dbReference type="KEGG" id="sam:MW1122"/>
<dbReference type="HOGENOM" id="CLU_077636_3_1_9"/>
<dbReference type="GO" id="GO:0005737">
    <property type="term" value="C:cytoplasm"/>
    <property type="evidence" value="ECO:0007669"/>
    <property type="project" value="UniProtKB-SubCell"/>
</dbReference>
<dbReference type="GO" id="GO:0005840">
    <property type="term" value="C:ribosome"/>
    <property type="evidence" value="ECO:0007669"/>
    <property type="project" value="InterPro"/>
</dbReference>
<dbReference type="GO" id="GO:0043022">
    <property type="term" value="F:ribosome binding"/>
    <property type="evidence" value="ECO:0007669"/>
    <property type="project" value="InterPro"/>
</dbReference>
<dbReference type="GO" id="GO:0042274">
    <property type="term" value="P:ribosomal small subunit biogenesis"/>
    <property type="evidence" value="ECO:0007669"/>
    <property type="project" value="UniProtKB-UniRule"/>
</dbReference>
<dbReference type="GO" id="GO:0006364">
    <property type="term" value="P:rRNA processing"/>
    <property type="evidence" value="ECO:0007669"/>
    <property type="project" value="UniProtKB-UniRule"/>
</dbReference>
<dbReference type="Gene3D" id="2.30.30.240">
    <property type="entry name" value="PRC-barrel domain"/>
    <property type="match status" value="1"/>
</dbReference>
<dbReference type="Gene3D" id="2.40.30.60">
    <property type="entry name" value="RimM"/>
    <property type="match status" value="1"/>
</dbReference>
<dbReference type="HAMAP" id="MF_00014">
    <property type="entry name" value="Ribosome_mat_RimM"/>
    <property type="match status" value="1"/>
</dbReference>
<dbReference type="InterPro" id="IPR011033">
    <property type="entry name" value="PRC_barrel-like_sf"/>
</dbReference>
<dbReference type="InterPro" id="IPR056792">
    <property type="entry name" value="PRC_RimM"/>
</dbReference>
<dbReference type="InterPro" id="IPR011961">
    <property type="entry name" value="RimM"/>
</dbReference>
<dbReference type="InterPro" id="IPR002676">
    <property type="entry name" value="RimM_N"/>
</dbReference>
<dbReference type="InterPro" id="IPR036976">
    <property type="entry name" value="RimM_N_sf"/>
</dbReference>
<dbReference type="InterPro" id="IPR009000">
    <property type="entry name" value="Transl_B-barrel_sf"/>
</dbReference>
<dbReference type="NCBIfam" id="TIGR02273">
    <property type="entry name" value="16S_RimM"/>
    <property type="match status" value="1"/>
</dbReference>
<dbReference type="PANTHER" id="PTHR33692">
    <property type="entry name" value="RIBOSOME MATURATION FACTOR RIMM"/>
    <property type="match status" value="1"/>
</dbReference>
<dbReference type="PANTHER" id="PTHR33692:SF1">
    <property type="entry name" value="RIBOSOME MATURATION FACTOR RIMM"/>
    <property type="match status" value="1"/>
</dbReference>
<dbReference type="Pfam" id="PF24986">
    <property type="entry name" value="PRC_RimM"/>
    <property type="match status" value="1"/>
</dbReference>
<dbReference type="Pfam" id="PF01782">
    <property type="entry name" value="RimM"/>
    <property type="match status" value="1"/>
</dbReference>
<dbReference type="SUPFAM" id="SSF50346">
    <property type="entry name" value="PRC-barrel domain"/>
    <property type="match status" value="1"/>
</dbReference>
<dbReference type="SUPFAM" id="SSF50447">
    <property type="entry name" value="Translation proteins"/>
    <property type="match status" value="1"/>
</dbReference>
<accession>P66657</accession>
<accession>Q99UN1</accession>
<keyword id="KW-0143">Chaperone</keyword>
<keyword id="KW-0963">Cytoplasm</keyword>
<keyword id="KW-0690">Ribosome biogenesis</keyword>
<keyword id="KW-0698">rRNA processing</keyword>
<organism>
    <name type="scientific">Staphylococcus aureus (strain MW2)</name>
    <dbReference type="NCBI Taxonomy" id="196620"/>
    <lineage>
        <taxon>Bacteria</taxon>
        <taxon>Bacillati</taxon>
        <taxon>Bacillota</taxon>
        <taxon>Bacilli</taxon>
        <taxon>Bacillales</taxon>
        <taxon>Staphylococcaceae</taxon>
        <taxon>Staphylococcus</taxon>
    </lineage>
</organism>